<keyword id="KW-0963">Cytoplasm</keyword>
<keyword id="KW-0489">Methyltransferase</keyword>
<keyword id="KW-1185">Reference proteome</keyword>
<keyword id="KW-0698">rRNA processing</keyword>
<keyword id="KW-0949">S-adenosyl-L-methionine</keyword>
<keyword id="KW-0808">Transferase</keyword>
<reference key="1">
    <citation type="journal article" date="2001" name="Proc. Natl. Acad. Sci. U.S.A.">
        <title>Complete genome sequence of an M1 strain of Streptococcus pyogenes.</title>
        <authorList>
            <person name="Ferretti J.J."/>
            <person name="McShan W.M."/>
            <person name="Ajdic D.J."/>
            <person name="Savic D.J."/>
            <person name="Savic G."/>
            <person name="Lyon K."/>
            <person name="Primeaux C."/>
            <person name="Sezate S."/>
            <person name="Suvorov A.N."/>
            <person name="Kenton S."/>
            <person name="Lai H.S."/>
            <person name="Lin S.P."/>
            <person name="Qian Y."/>
            <person name="Jia H.G."/>
            <person name="Najar F.Z."/>
            <person name="Ren Q."/>
            <person name="Zhu H."/>
            <person name="Song L."/>
            <person name="White J."/>
            <person name="Yuan X."/>
            <person name="Clifton S.W."/>
            <person name="Roe B.A."/>
            <person name="McLaughlin R.E."/>
        </authorList>
    </citation>
    <scope>NUCLEOTIDE SEQUENCE [LARGE SCALE GENOMIC DNA]</scope>
    <source>
        <strain>ATCC 700294 / SF370 / Serotype M1</strain>
    </source>
</reference>
<reference key="2">
    <citation type="journal article" date="2005" name="J. Infect. Dis.">
        <title>Evolutionary origin and emergence of a highly successful clone of serotype M1 group A Streptococcus involved multiple horizontal gene transfer events.</title>
        <authorList>
            <person name="Sumby P."/>
            <person name="Porcella S.F."/>
            <person name="Madrigal A.G."/>
            <person name="Barbian K.D."/>
            <person name="Virtaneva K."/>
            <person name="Ricklefs S.M."/>
            <person name="Sturdevant D.E."/>
            <person name="Graham M.R."/>
            <person name="Vuopio-Varkila J."/>
            <person name="Hoe N.P."/>
            <person name="Musser J.M."/>
        </authorList>
    </citation>
    <scope>NUCLEOTIDE SEQUENCE [LARGE SCALE GENOMIC DNA]</scope>
    <source>
        <strain>ATCC BAA-947 / MGAS5005 / Serotype M1</strain>
    </source>
</reference>
<sequence length="237" mass="26780">MTPQDFYRTLEEDGFSLSSKQKEQFDTYFKSLVEWNTKINLTAITEENEVYLKHFYDSIAPILQGFLANEPIKLLDIGAGAGFPSLPMKILFPNLEVTIIDSLNKRISFLTLLAQELGLENVHFFHGRAEDFGQDKAFRGQFDVVTARAVARMQVLSELTIPFLKIGGKLIALKAQAADQELEEAKNALCLLFGKVIKNHSYQLPNGDSRFITIVEKKKETPNKYPRKAGLPNKKPL</sequence>
<evidence type="ECO:0000255" key="1">
    <source>
        <dbReference type="HAMAP-Rule" id="MF_00074"/>
    </source>
</evidence>
<dbReference type="EC" id="2.1.1.-" evidence="1"/>
<dbReference type="EMBL" id="AE004092">
    <property type="protein sequence ID" value="AAK33385.1"/>
    <property type="molecule type" value="Genomic_DNA"/>
</dbReference>
<dbReference type="EMBL" id="CP000017">
    <property type="protein sequence ID" value="AAZ50897.1"/>
    <property type="molecule type" value="Genomic_DNA"/>
</dbReference>
<dbReference type="RefSeq" id="NP_268664.1">
    <property type="nucleotide sequence ID" value="NC_002737.2"/>
</dbReference>
<dbReference type="SMR" id="Q9A1D7"/>
<dbReference type="PaxDb" id="1314-HKU360_00317"/>
<dbReference type="KEGG" id="spy:SPy_0329"/>
<dbReference type="KEGG" id="spz:M5005_Spy0278"/>
<dbReference type="PATRIC" id="fig|160490.10.peg.285"/>
<dbReference type="HOGENOM" id="CLU_065341_0_2_9"/>
<dbReference type="OMA" id="AGMPNKK"/>
<dbReference type="Proteomes" id="UP000000750">
    <property type="component" value="Chromosome"/>
</dbReference>
<dbReference type="GO" id="GO:0005829">
    <property type="term" value="C:cytosol"/>
    <property type="evidence" value="ECO:0007669"/>
    <property type="project" value="TreeGrafter"/>
</dbReference>
<dbReference type="GO" id="GO:0070043">
    <property type="term" value="F:rRNA (guanine-N7-)-methyltransferase activity"/>
    <property type="evidence" value="ECO:0007669"/>
    <property type="project" value="UniProtKB-UniRule"/>
</dbReference>
<dbReference type="CDD" id="cd02440">
    <property type="entry name" value="AdoMet_MTases"/>
    <property type="match status" value="1"/>
</dbReference>
<dbReference type="FunFam" id="3.40.50.150:FF:000041">
    <property type="entry name" value="Ribosomal RNA small subunit methyltransferase G"/>
    <property type="match status" value="1"/>
</dbReference>
<dbReference type="Gene3D" id="3.40.50.150">
    <property type="entry name" value="Vaccinia Virus protein VP39"/>
    <property type="match status" value="1"/>
</dbReference>
<dbReference type="HAMAP" id="MF_00074">
    <property type="entry name" value="16SrRNA_methyltr_G"/>
    <property type="match status" value="1"/>
</dbReference>
<dbReference type="InterPro" id="IPR003682">
    <property type="entry name" value="rRNA_ssu_MeTfrase_G"/>
</dbReference>
<dbReference type="InterPro" id="IPR029063">
    <property type="entry name" value="SAM-dependent_MTases_sf"/>
</dbReference>
<dbReference type="NCBIfam" id="TIGR00138">
    <property type="entry name" value="rsmG_gidB"/>
    <property type="match status" value="1"/>
</dbReference>
<dbReference type="PANTHER" id="PTHR31760">
    <property type="entry name" value="S-ADENOSYL-L-METHIONINE-DEPENDENT METHYLTRANSFERASES SUPERFAMILY PROTEIN"/>
    <property type="match status" value="1"/>
</dbReference>
<dbReference type="PANTHER" id="PTHR31760:SF0">
    <property type="entry name" value="S-ADENOSYL-L-METHIONINE-DEPENDENT METHYLTRANSFERASES SUPERFAMILY PROTEIN"/>
    <property type="match status" value="1"/>
</dbReference>
<dbReference type="Pfam" id="PF02527">
    <property type="entry name" value="GidB"/>
    <property type="match status" value="1"/>
</dbReference>
<dbReference type="PIRSF" id="PIRSF003078">
    <property type="entry name" value="GidB"/>
    <property type="match status" value="1"/>
</dbReference>
<dbReference type="SUPFAM" id="SSF53335">
    <property type="entry name" value="S-adenosyl-L-methionine-dependent methyltransferases"/>
    <property type="match status" value="1"/>
</dbReference>
<proteinExistence type="inferred from homology"/>
<protein>
    <recommendedName>
        <fullName evidence="1">Ribosomal RNA small subunit methyltransferase G</fullName>
        <ecNumber evidence="1">2.1.1.-</ecNumber>
    </recommendedName>
    <alternativeName>
        <fullName evidence="1">16S rRNA 7-methylguanosine methyltransferase</fullName>
        <shortName evidence="1">16S rRNA m7G methyltransferase</shortName>
    </alternativeName>
</protein>
<organism>
    <name type="scientific">Streptococcus pyogenes serotype M1</name>
    <dbReference type="NCBI Taxonomy" id="301447"/>
    <lineage>
        <taxon>Bacteria</taxon>
        <taxon>Bacillati</taxon>
        <taxon>Bacillota</taxon>
        <taxon>Bacilli</taxon>
        <taxon>Lactobacillales</taxon>
        <taxon>Streptococcaceae</taxon>
        <taxon>Streptococcus</taxon>
    </lineage>
</organism>
<gene>
    <name evidence="1" type="primary">rsmG</name>
    <name type="ordered locus">SPy_0329</name>
    <name type="ordered locus">M5005_Spy0278</name>
</gene>
<feature type="chain" id="PRO_0000184342" description="Ribosomal RNA small subunit methyltransferase G">
    <location>
        <begin position="1"/>
        <end position="237"/>
    </location>
</feature>
<feature type="binding site" evidence="1">
    <location>
        <position position="78"/>
    </location>
    <ligand>
        <name>S-adenosyl-L-methionine</name>
        <dbReference type="ChEBI" id="CHEBI:59789"/>
    </ligand>
</feature>
<feature type="binding site" evidence="1">
    <location>
        <position position="83"/>
    </location>
    <ligand>
        <name>S-adenosyl-L-methionine</name>
        <dbReference type="ChEBI" id="CHEBI:59789"/>
    </ligand>
</feature>
<feature type="binding site" evidence="1">
    <location>
        <begin position="129"/>
        <end position="130"/>
    </location>
    <ligand>
        <name>S-adenosyl-L-methionine</name>
        <dbReference type="ChEBI" id="CHEBI:59789"/>
    </ligand>
</feature>
<feature type="binding site" evidence="1">
    <location>
        <position position="148"/>
    </location>
    <ligand>
        <name>S-adenosyl-L-methionine</name>
        <dbReference type="ChEBI" id="CHEBI:59789"/>
    </ligand>
</feature>
<comment type="function">
    <text evidence="1">Specifically methylates the N7 position of a guanine in 16S rRNA.</text>
</comment>
<comment type="subcellular location">
    <subcellularLocation>
        <location evidence="1">Cytoplasm</location>
    </subcellularLocation>
</comment>
<comment type="similarity">
    <text evidence="1">Belongs to the methyltransferase superfamily. RNA methyltransferase RsmG family.</text>
</comment>
<accession>Q9A1D7</accession>
<accession>Q490S1</accession>
<name>RSMG_STRP1</name>